<proteinExistence type="evidence at transcript level"/>
<accession>P06636</accession>
<protein>
    <recommendedName>
        <fullName>Hemoglobin subunit alpha-3</fullName>
    </recommendedName>
    <alternativeName>
        <fullName>Alpha-3-globin</fullName>
    </alternativeName>
    <alternativeName>
        <fullName>Alpha-T3</fullName>
    </alternativeName>
    <alternativeName>
        <fullName>Hemoglobin alpha-2 chain</fullName>
    </alternativeName>
</protein>
<comment type="function">
    <text>This is a larval (tadpole) alpha-globin.</text>
</comment>
<comment type="subunit">
    <text>Heterotetramer of two alpha chains and two beta chains.</text>
</comment>
<comment type="tissue specificity">
    <text>Red blood cells.</text>
</comment>
<comment type="polymorphism">
    <text evidence="2">Alpha T3 may be an allele of alpha T4.</text>
</comment>
<comment type="similarity">
    <text evidence="1">Belongs to the globin family.</text>
</comment>
<sequence length="142" mass="15434">MTLTDSDKAAVVALWGKIAPQANAIGAEALERLFLSYPQTKTYFSHFDLSHGSADLANHGGKVVNALGEAAKHIDDLDAALSTLSDLHAYNLRVDPGNFKLLSHTIQVTLAIHFHKEFDAATQAAWDKFLAEVATVLTSKYR</sequence>
<keyword id="KW-0349">Heme</keyword>
<keyword id="KW-0408">Iron</keyword>
<keyword id="KW-0479">Metal-binding</keyword>
<keyword id="KW-0561">Oxygen transport</keyword>
<keyword id="KW-1185">Reference proteome</keyword>
<keyword id="KW-0813">Transport</keyword>
<gene>
    <name type="primary">hba3</name>
</gene>
<evidence type="ECO:0000255" key="1">
    <source>
        <dbReference type="PROSITE-ProRule" id="PRU00238"/>
    </source>
</evidence>
<evidence type="ECO:0000305" key="2">
    <source>
    </source>
</evidence>
<organism>
    <name type="scientific">Xenopus laevis</name>
    <name type="common">African clawed frog</name>
    <dbReference type="NCBI Taxonomy" id="8355"/>
    <lineage>
        <taxon>Eukaryota</taxon>
        <taxon>Metazoa</taxon>
        <taxon>Chordata</taxon>
        <taxon>Craniata</taxon>
        <taxon>Vertebrata</taxon>
        <taxon>Euteleostomi</taxon>
        <taxon>Amphibia</taxon>
        <taxon>Batrachia</taxon>
        <taxon>Anura</taxon>
        <taxon>Pipoidea</taxon>
        <taxon>Pipidae</taxon>
        <taxon>Xenopodinae</taxon>
        <taxon>Xenopus</taxon>
        <taxon>Xenopus</taxon>
    </lineage>
</organism>
<name>HBA3_XENLA</name>
<dbReference type="EMBL" id="X02796">
    <property type="protein sequence ID" value="CAA26564.1"/>
    <property type="molecule type" value="mRNA"/>
</dbReference>
<dbReference type="PIR" id="A24338">
    <property type="entry name" value="A24338"/>
</dbReference>
<dbReference type="SMR" id="P06636"/>
<dbReference type="AGR" id="Xenbase:XB-GENE-973877"/>
<dbReference type="Xenbase" id="XB-GENE-973877">
    <property type="gene designation" value="hba3.L"/>
</dbReference>
<dbReference type="Proteomes" id="UP000186698">
    <property type="component" value="Unplaced"/>
</dbReference>
<dbReference type="GO" id="GO:0072562">
    <property type="term" value="C:blood microparticle"/>
    <property type="evidence" value="ECO:0007669"/>
    <property type="project" value="TreeGrafter"/>
</dbReference>
<dbReference type="GO" id="GO:0031838">
    <property type="term" value="C:haptoglobin-hemoglobin complex"/>
    <property type="evidence" value="ECO:0000318"/>
    <property type="project" value="GO_Central"/>
</dbReference>
<dbReference type="GO" id="GO:0005833">
    <property type="term" value="C:hemoglobin complex"/>
    <property type="evidence" value="ECO:0000318"/>
    <property type="project" value="GO_Central"/>
</dbReference>
<dbReference type="GO" id="GO:0031720">
    <property type="term" value="F:haptoglobin binding"/>
    <property type="evidence" value="ECO:0007669"/>
    <property type="project" value="TreeGrafter"/>
</dbReference>
<dbReference type="GO" id="GO:0020037">
    <property type="term" value="F:heme binding"/>
    <property type="evidence" value="ECO:0000318"/>
    <property type="project" value="GO_Central"/>
</dbReference>
<dbReference type="GO" id="GO:0005506">
    <property type="term" value="F:iron ion binding"/>
    <property type="evidence" value="ECO:0007669"/>
    <property type="project" value="InterPro"/>
</dbReference>
<dbReference type="GO" id="GO:0043177">
    <property type="term" value="F:organic acid binding"/>
    <property type="evidence" value="ECO:0007669"/>
    <property type="project" value="TreeGrafter"/>
</dbReference>
<dbReference type="GO" id="GO:0019825">
    <property type="term" value="F:oxygen binding"/>
    <property type="evidence" value="ECO:0000318"/>
    <property type="project" value="GO_Central"/>
</dbReference>
<dbReference type="GO" id="GO:0005344">
    <property type="term" value="F:oxygen carrier activity"/>
    <property type="evidence" value="ECO:0000318"/>
    <property type="project" value="GO_Central"/>
</dbReference>
<dbReference type="GO" id="GO:0004601">
    <property type="term" value="F:peroxidase activity"/>
    <property type="evidence" value="ECO:0007669"/>
    <property type="project" value="TreeGrafter"/>
</dbReference>
<dbReference type="GO" id="GO:0042744">
    <property type="term" value="P:hydrogen peroxide catabolic process"/>
    <property type="evidence" value="ECO:0000318"/>
    <property type="project" value="GO_Central"/>
</dbReference>
<dbReference type="CDD" id="cd08927">
    <property type="entry name" value="Hb-alpha-like"/>
    <property type="match status" value="1"/>
</dbReference>
<dbReference type="FunFam" id="1.10.490.10:FF:000002">
    <property type="entry name" value="Hemoglobin subunit alpha"/>
    <property type="match status" value="1"/>
</dbReference>
<dbReference type="Gene3D" id="1.10.490.10">
    <property type="entry name" value="Globins"/>
    <property type="match status" value="1"/>
</dbReference>
<dbReference type="InterPro" id="IPR000971">
    <property type="entry name" value="Globin"/>
</dbReference>
<dbReference type="InterPro" id="IPR009050">
    <property type="entry name" value="Globin-like_sf"/>
</dbReference>
<dbReference type="InterPro" id="IPR012292">
    <property type="entry name" value="Globin/Proto"/>
</dbReference>
<dbReference type="InterPro" id="IPR002338">
    <property type="entry name" value="Hemoglobin_a-typ"/>
</dbReference>
<dbReference type="InterPro" id="IPR050056">
    <property type="entry name" value="Hemoglobin_oxygen_transport"/>
</dbReference>
<dbReference type="InterPro" id="IPR002339">
    <property type="entry name" value="Hemoglobin_pi"/>
</dbReference>
<dbReference type="PANTHER" id="PTHR11442">
    <property type="entry name" value="HEMOGLOBIN FAMILY MEMBER"/>
    <property type="match status" value="1"/>
</dbReference>
<dbReference type="PANTHER" id="PTHR11442:SF8">
    <property type="entry name" value="HEMOGLOBIN SUBUNIT MU"/>
    <property type="match status" value="1"/>
</dbReference>
<dbReference type="Pfam" id="PF00042">
    <property type="entry name" value="Globin"/>
    <property type="match status" value="1"/>
</dbReference>
<dbReference type="PRINTS" id="PR00612">
    <property type="entry name" value="ALPHAHAEM"/>
</dbReference>
<dbReference type="PRINTS" id="PR00815">
    <property type="entry name" value="PIHAEM"/>
</dbReference>
<dbReference type="SUPFAM" id="SSF46458">
    <property type="entry name" value="Globin-like"/>
    <property type="match status" value="1"/>
</dbReference>
<dbReference type="PROSITE" id="PS01033">
    <property type="entry name" value="GLOBIN"/>
    <property type="match status" value="1"/>
</dbReference>
<feature type="initiator methionine" description="Removed">
    <location>
        <position position="1"/>
    </location>
</feature>
<feature type="chain" id="PRO_0000052809" description="Hemoglobin subunit alpha-3">
    <location>
        <begin position="2"/>
        <end position="142"/>
    </location>
</feature>
<feature type="domain" description="Globin" evidence="1">
    <location>
        <begin position="2"/>
        <end position="142"/>
    </location>
</feature>
<feature type="binding site" evidence="1">
    <location>
        <position position="59"/>
    </location>
    <ligand>
        <name>O2</name>
        <dbReference type="ChEBI" id="CHEBI:15379"/>
    </ligand>
</feature>
<feature type="binding site" description="proximal binding residue" evidence="1">
    <location>
        <position position="88"/>
    </location>
    <ligand>
        <name>heme b</name>
        <dbReference type="ChEBI" id="CHEBI:60344"/>
    </ligand>
    <ligandPart>
        <name>Fe</name>
        <dbReference type="ChEBI" id="CHEBI:18248"/>
    </ligandPart>
</feature>
<reference key="1">
    <citation type="journal article" date="1985" name="Nucleic Acids Res.">
        <title>The pattern of expression of the Xenopus laevis tadpole alpha-globin genes and the amino acid sequence of the three major tadpole alpha-globin polypeptides.</title>
        <authorList>
            <person name="Banville D."/>
            <person name="Williams J.G."/>
        </authorList>
    </citation>
    <scope>NUCLEOTIDE SEQUENCE [MRNA]</scope>
</reference>